<organism>
    <name type="scientific">Bacillus subtilis (strain 168)</name>
    <dbReference type="NCBI Taxonomy" id="224308"/>
    <lineage>
        <taxon>Bacteria</taxon>
        <taxon>Bacillati</taxon>
        <taxon>Bacillota</taxon>
        <taxon>Bacilli</taxon>
        <taxon>Bacillales</taxon>
        <taxon>Bacillaceae</taxon>
        <taxon>Bacillus</taxon>
    </lineage>
</organism>
<proteinExistence type="predicted"/>
<keyword id="KW-1003">Cell membrane</keyword>
<keyword id="KW-0472">Membrane</keyword>
<keyword id="KW-1185">Reference proteome</keyword>
<keyword id="KW-0812">Transmembrane</keyword>
<keyword id="KW-1133">Transmembrane helix</keyword>
<comment type="subcellular location">
    <subcellularLocation>
        <location evidence="2">Cell membrane</location>
        <topology evidence="2">Multi-pass membrane protein</topology>
    </subcellularLocation>
</comment>
<comment type="similarity">
    <text evidence="2">To L.lactis phage infection protein (PIP).</text>
</comment>
<protein>
    <recommendedName>
        <fullName>Uncharacterized protein YhgE</fullName>
    </recommendedName>
    <alternativeName>
        <fullName>ORFB</fullName>
    </alternativeName>
</protein>
<dbReference type="EMBL" id="Y14083">
    <property type="protein sequence ID" value="CAA74522.1"/>
    <property type="molecule type" value="Genomic_DNA"/>
</dbReference>
<dbReference type="EMBL" id="AL009126">
    <property type="protein sequence ID" value="CAB12856.1"/>
    <property type="molecule type" value="Genomic_DNA"/>
</dbReference>
<dbReference type="EMBL" id="M97208">
    <property type="protein sequence ID" value="AAA22521.1"/>
    <property type="molecule type" value="Genomic_DNA"/>
</dbReference>
<dbReference type="PIR" id="H69832">
    <property type="entry name" value="H69832"/>
</dbReference>
<dbReference type="RefSeq" id="NP_388897.1">
    <property type="nucleotide sequence ID" value="NC_000964.3"/>
</dbReference>
<dbReference type="RefSeq" id="WP_003245424.1">
    <property type="nucleotide sequence ID" value="NZ_OZ025638.1"/>
</dbReference>
<dbReference type="FunCoup" id="P32399">
    <property type="interactions" value="94"/>
</dbReference>
<dbReference type="IntAct" id="P32399">
    <property type="interactions" value="37"/>
</dbReference>
<dbReference type="STRING" id="224308.BSU10160"/>
<dbReference type="TCDB" id="3.A.1.155.3">
    <property type="family name" value="the atp-binding cassette (abc) superfamily"/>
</dbReference>
<dbReference type="PaxDb" id="224308-BSU10160"/>
<dbReference type="EnsemblBacteria" id="CAB12856">
    <property type="protein sequence ID" value="CAB12856"/>
    <property type="gene ID" value="BSU_10160"/>
</dbReference>
<dbReference type="GeneID" id="936303"/>
<dbReference type="KEGG" id="bsu:BSU10160"/>
<dbReference type="PATRIC" id="fig|224308.179.peg.1092"/>
<dbReference type="eggNOG" id="COG1511">
    <property type="taxonomic scope" value="Bacteria"/>
</dbReference>
<dbReference type="InParanoid" id="P32399"/>
<dbReference type="OrthoDB" id="9811483at2"/>
<dbReference type="PhylomeDB" id="P32399"/>
<dbReference type="BioCyc" id="BSUB:BSU10160-MONOMER"/>
<dbReference type="Proteomes" id="UP000001570">
    <property type="component" value="Chromosome"/>
</dbReference>
<dbReference type="GO" id="GO:0005886">
    <property type="term" value="C:plasma membrane"/>
    <property type="evidence" value="ECO:0007669"/>
    <property type="project" value="UniProtKB-SubCell"/>
</dbReference>
<dbReference type="GO" id="GO:0140359">
    <property type="term" value="F:ABC-type transporter activity"/>
    <property type="evidence" value="ECO:0007669"/>
    <property type="project" value="InterPro"/>
</dbReference>
<dbReference type="Gene3D" id="3.40.1710.10">
    <property type="entry name" value="abc type-2 transporter like domain"/>
    <property type="match status" value="1"/>
</dbReference>
<dbReference type="Gene3D" id="1.10.287.950">
    <property type="entry name" value="Methyl-accepting chemotaxis protein"/>
    <property type="match status" value="2"/>
</dbReference>
<dbReference type="InterPro" id="IPR013525">
    <property type="entry name" value="ABC2_TM"/>
</dbReference>
<dbReference type="InterPro" id="IPR017501">
    <property type="entry name" value="Phage_infect_YhgE_C"/>
</dbReference>
<dbReference type="InterPro" id="IPR017500">
    <property type="entry name" value="Phage_infect_YhgE_N"/>
</dbReference>
<dbReference type="InterPro" id="IPR051328">
    <property type="entry name" value="T7SS_ABC-Transporter"/>
</dbReference>
<dbReference type="InterPro" id="IPR023908">
    <property type="entry name" value="xxxLxxG_rpt"/>
</dbReference>
<dbReference type="NCBIfam" id="TIGR03062">
    <property type="entry name" value="pip_yhgE_Cterm"/>
    <property type="match status" value="1"/>
</dbReference>
<dbReference type="NCBIfam" id="TIGR03061">
    <property type="entry name" value="pip_yhgE_Nterm"/>
    <property type="match status" value="1"/>
</dbReference>
<dbReference type="NCBIfam" id="TIGR03057">
    <property type="entry name" value="xxxLxxG_by_4"/>
    <property type="match status" value="1"/>
</dbReference>
<dbReference type="PANTHER" id="PTHR43077:SF5">
    <property type="entry name" value="PHAGE INFECTION PROTEIN"/>
    <property type="match status" value="1"/>
</dbReference>
<dbReference type="PANTHER" id="PTHR43077">
    <property type="entry name" value="TRANSPORT PERMEASE YVFS-RELATED"/>
    <property type="match status" value="1"/>
</dbReference>
<dbReference type="Pfam" id="PF12698">
    <property type="entry name" value="ABC2_membrane_3"/>
    <property type="match status" value="2"/>
</dbReference>
<dbReference type="SUPFAM" id="SSF58104">
    <property type="entry name" value="Methyl-accepting chemotaxis protein (MCP) signaling domain"/>
    <property type="match status" value="1"/>
</dbReference>
<sequence>MNTIRSQWKDIVTSKKLLIPIIAILFVPLIYSGVFLKAYWDPYGTVDQLPVVVVNQDKGATYEGEKLQIGDDLVKELKDNNNFDWHFSNDLDQSLKDLLNQKYYLVVEIPEDFSKNASTVLDKNPKKLDLKYHTNAGSNYVGATIGEKAIDKLKASVSKEVTEQYTKVIFDNFKDIAKGLSDASSGAKKIDDGTKDAKNGSAQLKENLAKLKESTATISDKTAQLADGAAQVTSGIQSLDSSLGKFQDSSNQIYDKSSQLAAGSGELTSKMNELLAGLQNVQKGTPNLTNGLDQLNSKVQEGSEKAAKAEKIINALDLTKLETAVNNLEKSETAMKEFKKQLTDFENSLKNRDQAFKNVINSSDFLTAEQKSQLINSVEKKLPQVDAPDFDQILSQLPTADQLPDIATIKSSLEDVKAQVAQVKAMPEATSKLYNGAKTIQDAIDRLTEGADKIYNGSQKLTDGQTKLTAGIGEYNKQFAKAKAGSEQLVTGSSQVSGGLFKLLDGSKQVQSGSSKLADGSASLDTGLGKLLDGTGELSSKLKDAADQTGDIDADDQTYGMFADPVKTKDDAIHSVPNYGTGLTPYILSMGLYVGGIMLTVVFPLKEASGRPRNGFEWFFSKFNVMMLVGIIQSLIVATVLLLGIGLEVESTWRFYVFTIITSLAFLAIIQFLATTMGNPGRFIAVIILVLQLGASGGTFPLELLPNFYQVIHGALPMTYSINGFRAVISNGDFGYMWQMAGVLIGIALVMIALSITYFTMLSRKEETSEEQPAS</sequence>
<evidence type="ECO:0000255" key="1"/>
<evidence type="ECO:0000305" key="2"/>
<reference key="1">
    <citation type="journal article" date="1998" name="Microbiology">
        <title>The 172 kb prkA-addAB region from 83 degrees to 97 degrees of the Bacillus subtilis chromosome contains several dysfunctional genes, the glyB marker, many genes encoding transporter proteins, and the ubiquitous hit gene.</title>
        <authorList>
            <person name="Noback M.A."/>
            <person name="Holsappel S."/>
            <person name="Kiewiet R."/>
            <person name="Terpstra P."/>
            <person name="Wambutt R."/>
            <person name="Wedler H."/>
            <person name="Venema G."/>
            <person name="Bron S."/>
        </authorList>
    </citation>
    <scope>NUCLEOTIDE SEQUENCE [GENOMIC DNA]</scope>
    <source>
        <strain>168</strain>
    </source>
</reference>
<reference key="2">
    <citation type="journal article" date="1997" name="Nature">
        <title>The complete genome sequence of the Gram-positive bacterium Bacillus subtilis.</title>
        <authorList>
            <person name="Kunst F."/>
            <person name="Ogasawara N."/>
            <person name="Moszer I."/>
            <person name="Albertini A.M."/>
            <person name="Alloni G."/>
            <person name="Azevedo V."/>
            <person name="Bertero M.G."/>
            <person name="Bessieres P."/>
            <person name="Bolotin A."/>
            <person name="Borchert S."/>
            <person name="Borriss R."/>
            <person name="Boursier L."/>
            <person name="Brans A."/>
            <person name="Braun M."/>
            <person name="Brignell S.C."/>
            <person name="Bron S."/>
            <person name="Brouillet S."/>
            <person name="Bruschi C.V."/>
            <person name="Caldwell B."/>
            <person name="Capuano V."/>
            <person name="Carter N.M."/>
            <person name="Choi S.-K."/>
            <person name="Codani J.-J."/>
            <person name="Connerton I.F."/>
            <person name="Cummings N.J."/>
            <person name="Daniel R.A."/>
            <person name="Denizot F."/>
            <person name="Devine K.M."/>
            <person name="Duesterhoeft A."/>
            <person name="Ehrlich S.D."/>
            <person name="Emmerson P.T."/>
            <person name="Entian K.-D."/>
            <person name="Errington J."/>
            <person name="Fabret C."/>
            <person name="Ferrari E."/>
            <person name="Foulger D."/>
            <person name="Fritz C."/>
            <person name="Fujita M."/>
            <person name="Fujita Y."/>
            <person name="Fuma S."/>
            <person name="Galizzi A."/>
            <person name="Galleron N."/>
            <person name="Ghim S.-Y."/>
            <person name="Glaser P."/>
            <person name="Goffeau A."/>
            <person name="Golightly E.J."/>
            <person name="Grandi G."/>
            <person name="Guiseppi G."/>
            <person name="Guy B.J."/>
            <person name="Haga K."/>
            <person name="Haiech J."/>
            <person name="Harwood C.R."/>
            <person name="Henaut A."/>
            <person name="Hilbert H."/>
            <person name="Holsappel S."/>
            <person name="Hosono S."/>
            <person name="Hullo M.-F."/>
            <person name="Itaya M."/>
            <person name="Jones L.-M."/>
            <person name="Joris B."/>
            <person name="Karamata D."/>
            <person name="Kasahara Y."/>
            <person name="Klaerr-Blanchard M."/>
            <person name="Klein C."/>
            <person name="Kobayashi Y."/>
            <person name="Koetter P."/>
            <person name="Koningstein G."/>
            <person name="Krogh S."/>
            <person name="Kumano M."/>
            <person name="Kurita K."/>
            <person name="Lapidus A."/>
            <person name="Lardinois S."/>
            <person name="Lauber J."/>
            <person name="Lazarevic V."/>
            <person name="Lee S.-M."/>
            <person name="Levine A."/>
            <person name="Liu H."/>
            <person name="Masuda S."/>
            <person name="Mauel C."/>
            <person name="Medigue C."/>
            <person name="Medina N."/>
            <person name="Mellado R.P."/>
            <person name="Mizuno M."/>
            <person name="Moestl D."/>
            <person name="Nakai S."/>
            <person name="Noback M."/>
            <person name="Noone D."/>
            <person name="O'Reilly M."/>
            <person name="Ogawa K."/>
            <person name="Ogiwara A."/>
            <person name="Oudega B."/>
            <person name="Park S.-H."/>
            <person name="Parro V."/>
            <person name="Pohl T.M."/>
            <person name="Portetelle D."/>
            <person name="Porwollik S."/>
            <person name="Prescott A.M."/>
            <person name="Presecan E."/>
            <person name="Pujic P."/>
            <person name="Purnelle B."/>
            <person name="Rapoport G."/>
            <person name="Rey M."/>
            <person name="Reynolds S."/>
            <person name="Rieger M."/>
            <person name="Rivolta C."/>
            <person name="Rocha E."/>
            <person name="Roche B."/>
            <person name="Rose M."/>
            <person name="Sadaie Y."/>
            <person name="Sato T."/>
            <person name="Scanlan E."/>
            <person name="Schleich S."/>
            <person name="Schroeter R."/>
            <person name="Scoffone F."/>
            <person name="Sekiguchi J."/>
            <person name="Sekowska A."/>
            <person name="Seror S.J."/>
            <person name="Serror P."/>
            <person name="Shin B.-S."/>
            <person name="Soldo B."/>
            <person name="Sorokin A."/>
            <person name="Tacconi E."/>
            <person name="Takagi T."/>
            <person name="Takahashi H."/>
            <person name="Takemaru K."/>
            <person name="Takeuchi M."/>
            <person name="Tamakoshi A."/>
            <person name="Tanaka T."/>
            <person name="Terpstra P."/>
            <person name="Tognoni A."/>
            <person name="Tosato V."/>
            <person name="Uchiyama S."/>
            <person name="Vandenbol M."/>
            <person name="Vannier F."/>
            <person name="Vassarotti A."/>
            <person name="Viari A."/>
            <person name="Wambutt R."/>
            <person name="Wedler E."/>
            <person name="Wedler H."/>
            <person name="Weitzenegger T."/>
            <person name="Winters P."/>
            <person name="Wipat A."/>
            <person name="Yamamoto H."/>
            <person name="Yamane K."/>
            <person name="Yasumoto K."/>
            <person name="Yata K."/>
            <person name="Yoshida K."/>
            <person name="Yoshikawa H.-F."/>
            <person name="Zumstein E."/>
            <person name="Yoshikawa H."/>
            <person name="Danchin A."/>
        </authorList>
    </citation>
    <scope>NUCLEOTIDE SEQUENCE [LARGE SCALE GENOMIC DNA]</scope>
    <source>
        <strain>168</strain>
    </source>
</reference>
<reference key="3">
    <citation type="journal article" date="1992" name="J. Bacteriol.">
        <title>Cloning and characterization of the Bacillus subtilis hemEHY gene cluster, which encodes protoheme IX biosynthetic enzymes.</title>
        <authorList>
            <person name="Hansson M."/>
            <person name="Hederstedt L."/>
        </authorList>
    </citation>
    <scope>NUCLEOTIDE SEQUENCE [GENOMIC DNA] OF 1-145</scope>
</reference>
<accession>P32399</accession>
<name>YHGE_BACSU</name>
<feature type="chain" id="PRO_0000049579" description="Uncharacterized protein YhgE">
    <location>
        <begin position="1"/>
        <end position="775"/>
    </location>
</feature>
<feature type="transmembrane region" description="Helical" evidence="1">
    <location>
        <begin position="16"/>
        <end position="36"/>
    </location>
</feature>
<feature type="transmembrane region" description="Helical" evidence="1">
    <location>
        <begin position="585"/>
        <end position="605"/>
    </location>
</feature>
<feature type="transmembrane region" description="Helical" evidence="1">
    <location>
        <begin position="625"/>
        <end position="645"/>
    </location>
</feature>
<feature type="transmembrane region" description="Helical" evidence="1">
    <location>
        <begin position="655"/>
        <end position="675"/>
    </location>
</feature>
<feature type="transmembrane region" description="Helical" evidence="1">
    <location>
        <begin position="742"/>
        <end position="762"/>
    </location>
</feature>
<gene>
    <name type="primary">yhgE</name>
    <name type="synonym">yixE</name>
    <name type="ordered locus">BSU10160</name>
</gene>